<gene>
    <name evidence="1" type="primary">pcn2</name>
    <name type="ordered locus">PAE0720</name>
</gene>
<protein>
    <recommendedName>
        <fullName evidence="1">DNA polymerase sliding clamp 2</fullName>
    </recommendedName>
    <alternativeName>
        <fullName evidence="1">Proliferating cell nuclear antigen homolog 2</fullName>
        <shortName evidence="1">PCNA 2</shortName>
    </alternativeName>
</protein>
<accession>Q8ZYL6</accession>
<proteinExistence type="inferred from homology"/>
<sequence>MSVRALFPKGKEPRYAFEVLIRMLPEAVLNFSSDGISLKALDPTKTALLDLTFYATALEDYSIDEETKVGIIFTTIKDVIKRIGATEKLELEVDKERNRFSFYIYPKKGREVGLVRRFSFPIVQVLEEEIPELAVSFDASFEIDSAVLDDILAMVDEVSDWIQITVSPDKVLFRGVGEGGKAAETELSYDSESVFNISAGEAASAKYSVEMLRDISGKMKSLSKRVKVELSANKPIRLTYEFTSGVFTATIAPRVD</sequence>
<keyword id="KW-0235">DNA replication</keyword>
<keyword id="KW-0238">DNA-binding</keyword>
<keyword id="KW-1185">Reference proteome</keyword>
<comment type="function">
    <text evidence="1">Sliding clamp subunit that acts as a moving platform for DNA processing. Responsible for tethering the catalytic subunit of DNA polymerase and other proteins to DNA during high-speed replication.</text>
</comment>
<comment type="subunit">
    <text evidence="1">Homotrimer. The subunits circularize to form a toroid; DNA passes through its center. Replication factor C (RFC) is required to load the toroid on the DNA.</text>
</comment>
<comment type="similarity">
    <text evidence="1">Belongs to the PCNA family.</text>
</comment>
<evidence type="ECO:0000255" key="1">
    <source>
        <dbReference type="HAMAP-Rule" id="MF_00317"/>
    </source>
</evidence>
<name>PCNA2_PYRAE</name>
<feature type="chain" id="PRO_0000149205" description="DNA polymerase sliding clamp 2">
    <location>
        <begin position="1"/>
        <end position="256"/>
    </location>
</feature>
<reference key="1">
    <citation type="journal article" date="2002" name="Proc. Natl. Acad. Sci. U.S.A.">
        <title>Genome sequence of the hyperthermophilic crenarchaeon Pyrobaculum aerophilum.</title>
        <authorList>
            <person name="Fitz-Gibbon S.T."/>
            <person name="Ladner H."/>
            <person name="Kim U.-J."/>
            <person name="Stetter K.O."/>
            <person name="Simon M.I."/>
            <person name="Miller J.H."/>
        </authorList>
    </citation>
    <scope>NUCLEOTIDE SEQUENCE [LARGE SCALE GENOMIC DNA]</scope>
    <source>
        <strain>ATCC 51768 / DSM 7523 / JCM 9630 / CIP 104966 / NBRC 100827 / IM2</strain>
    </source>
</reference>
<organism>
    <name type="scientific">Pyrobaculum aerophilum (strain ATCC 51768 / DSM 7523 / JCM 9630 / CIP 104966 / NBRC 100827 / IM2)</name>
    <dbReference type="NCBI Taxonomy" id="178306"/>
    <lineage>
        <taxon>Archaea</taxon>
        <taxon>Thermoproteota</taxon>
        <taxon>Thermoprotei</taxon>
        <taxon>Thermoproteales</taxon>
        <taxon>Thermoproteaceae</taxon>
        <taxon>Pyrobaculum</taxon>
    </lineage>
</organism>
<dbReference type="EMBL" id="AE009441">
    <property type="protein sequence ID" value="AAL62977.1"/>
    <property type="molecule type" value="Genomic_DNA"/>
</dbReference>
<dbReference type="RefSeq" id="WP_011007449.1">
    <property type="nucleotide sequence ID" value="NC_003364.1"/>
</dbReference>
<dbReference type="SMR" id="Q8ZYL6"/>
<dbReference type="STRING" id="178306.PAE0720"/>
<dbReference type="EnsemblBacteria" id="AAL62977">
    <property type="protein sequence ID" value="AAL62977"/>
    <property type="gene ID" value="PAE0720"/>
</dbReference>
<dbReference type="GeneID" id="1465204"/>
<dbReference type="KEGG" id="pai:PAE0720"/>
<dbReference type="PATRIC" id="fig|178306.9.peg.522"/>
<dbReference type="eggNOG" id="arCOG00488">
    <property type="taxonomic scope" value="Archaea"/>
</dbReference>
<dbReference type="HOGENOM" id="CLU_043978_1_0_2"/>
<dbReference type="InParanoid" id="Q8ZYL6"/>
<dbReference type="Proteomes" id="UP000002439">
    <property type="component" value="Chromosome"/>
</dbReference>
<dbReference type="GO" id="GO:0003677">
    <property type="term" value="F:DNA binding"/>
    <property type="evidence" value="ECO:0007669"/>
    <property type="project" value="UniProtKB-UniRule"/>
</dbReference>
<dbReference type="GO" id="GO:0030337">
    <property type="term" value="F:DNA polymerase processivity factor activity"/>
    <property type="evidence" value="ECO:0000318"/>
    <property type="project" value="GO_Central"/>
</dbReference>
<dbReference type="GO" id="GO:0006272">
    <property type="term" value="P:leading strand elongation"/>
    <property type="evidence" value="ECO:0000318"/>
    <property type="project" value="GO_Central"/>
</dbReference>
<dbReference type="GO" id="GO:0006275">
    <property type="term" value="P:regulation of DNA replication"/>
    <property type="evidence" value="ECO:0007669"/>
    <property type="project" value="UniProtKB-UniRule"/>
</dbReference>
<dbReference type="CDD" id="cd00577">
    <property type="entry name" value="PCNA"/>
    <property type="match status" value="1"/>
</dbReference>
<dbReference type="Gene3D" id="3.70.10.10">
    <property type="match status" value="1"/>
</dbReference>
<dbReference type="HAMAP" id="MF_00317">
    <property type="entry name" value="DNApol_clamp_arch"/>
    <property type="match status" value="1"/>
</dbReference>
<dbReference type="InterPro" id="IPR046938">
    <property type="entry name" value="DNA_clamp_sf"/>
</dbReference>
<dbReference type="InterPro" id="IPR000730">
    <property type="entry name" value="Pr_cel_nuc_antig"/>
</dbReference>
<dbReference type="InterPro" id="IPR022649">
    <property type="entry name" value="Pr_cel_nuc_antig_C"/>
</dbReference>
<dbReference type="InterPro" id="IPR022648">
    <property type="entry name" value="Pr_cel_nuc_antig_N"/>
</dbReference>
<dbReference type="NCBIfam" id="NF002221">
    <property type="entry name" value="PRK01115.1-4"/>
    <property type="match status" value="1"/>
</dbReference>
<dbReference type="PANTHER" id="PTHR11352">
    <property type="entry name" value="PROLIFERATING CELL NUCLEAR ANTIGEN"/>
    <property type="match status" value="1"/>
</dbReference>
<dbReference type="PANTHER" id="PTHR11352:SF0">
    <property type="entry name" value="PROLIFERATING CELL NUCLEAR ANTIGEN"/>
    <property type="match status" value="1"/>
</dbReference>
<dbReference type="Pfam" id="PF02747">
    <property type="entry name" value="PCNA_C"/>
    <property type="match status" value="1"/>
</dbReference>
<dbReference type="Pfam" id="PF00705">
    <property type="entry name" value="PCNA_N"/>
    <property type="match status" value="1"/>
</dbReference>
<dbReference type="SUPFAM" id="SSF55979">
    <property type="entry name" value="DNA clamp"/>
    <property type="match status" value="2"/>
</dbReference>